<comment type="function">
    <text evidence="1">Hydrolyzes ribosome-free peptidyl-tRNAs (with 1 or more amino acids incorporated), which drop off the ribosome during protein synthesis, or as a result of ribosome stalling.</text>
</comment>
<comment type="function">
    <text evidence="1">Catalyzes the release of premature peptidyl moieties from peptidyl-tRNA molecules trapped in stalled 50S ribosomal subunits, and thus maintains levels of free tRNAs and 50S ribosomes.</text>
</comment>
<comment type="catalytic activity">
    <reaction evidence="1">
        <text>an N-acyl-L-alpha-aminoacyl-tRNA + H2O = an N-acyl-L-amino acid + a tRNA + H(+)</text>
        <dbReference type="Rhea" id="RHEA:54448"/>
        <dbReference type="Rhea" id="RHEA-COMP:10123"/>
        <dbReference type="Rhea" id="RHEA-COMP:13883"/>
        <dbReference type="ChEBI" id="CHEBI:15377"/>
        <dbReference type="ChEBI" id="CHEBI:15378"/>
        <dbReference type="ChEBI" id="CHEBI:59874"/>
        <dbReference type="ChEBI" id="CHEBI:78442"/>
        <dbReference type="ChEBI" id="CHEBI:138191"/>
        <dbReference type="EC" id="3.1.1.29"/>
    </reaction>
</comment>
<comment type="subunit">
    <text evidence="1">Monomer.</text>
</comment>
<comment type="subcellular location">
    <subcellularLocation>
        <location evidence="1">Cytoplasm</location>
    </subcellularLocation>
</comment>
<comment type="similarity">
    <text evidence="1">Belongs to the PTH family.</text>
</comment>
<keyword id="KW-0963">Cytoplasm</keyword>
<keyword id="KW-0378">Hydrolase</keyword>
<keyword id="KW-0694">RNA-binding</keyword>
<keyword id="KW-0820">tRNA-binding</keyword>
<feature type="chain" id="PRO_1000010623" description="Peptidyl-tRNA hydrolase">
    <location>
        <begin position="1"/>
        <end position="185"/>
    </location>
</feature>
<feature type="active site" description="Proton acceptor" evidence="1">
    <location>
        <position position="19"/>
    </location>
</feature>
<feature type="binding site" evidence="1">
    <location>
        <position position="14"/>
    </location>
    <ligand>
        <name>tRNA</name>
        <dbReference type="ChEBI" id="CHEBI:17843"/>
    </ligand>
</feature>
<feature type="binding site" evidence="1">
    <location>
        <position position="64"/>
    </location>
    <ligand>
        <name>tRNA</name>
        <dbReference type="ChEBI" id="CHEBI:17843"/>
    </ligand>
</feature>
<feature type="binding site" evidence="1">
    <location>
        <position position="66"/>
    </location>
    <ligand>
        <name>tRNA</name>
        <dbReference type="ChEBI" id="CHEBI:17843"/>
    </ligand>
</feature>
<feature type="binding site" evidence="1">
    <location>
        <position position="112"/>
    </location>
    <ligand>
        <name>tRNA</name>
        <dbReference type="ChEBI" id="CHEBI:17843"/>
    </ligand>
</feature>
<feature type="site" description="Discriminates between blocked and unblocked aminoacyl-tRNA" evidence="1">
    <location>
        <position position="9"/>
    </location>
</feature>
<feature type="site" description="Stabilizes the basic form of H active site to accept a proton" evidence="1">
    <location>
        <position position="91"/>
    </location>
</feature>
<sequence length="185" mass="20887">MKMIVGLGNIGKEYDKTRHNTGFMVVDELAKKHDINNFKVQSDALIADFRVNGEKVLLVKPTTYMNDSGRAVRPLMDYYDVDLNDMIVAYDDMDMPVGKIRLRQKGSAGGHNGIKSIIAHVGTQSFNRVRVGIDHPTKESVVDYVLGKFRKEQITDFEIGVQNAVAALEDWTTIENFSQLMNKYN</sequence>
<reference key="1">
    <citation type="journal article" date="2006" name="Proc. Natl. Acad. Sci. U.S.A.">
        <title>Comparative genomics of the lactic acid bacteria.</title>
        <authorList>
            <person name="Makarova K.S."/>
            <person name="Slesarev A."/>
            <person name="Wolf Y.I."/>
            <person name="Sorokin A."/>
            <person name="Mirkin B."/>
            <person name="Koonin E.V."/>
            <person name="Pavlov A."/>
            <person name="Pavlova N."/>
            <person name="Karamychev V."/>
            <person name="Polouchine N."/>
            <person name="Shakhova V."/>
            <person name="Grigoriev I."/>
            <person name="Lou Y."/>
            <person name="Rohksar D."/>
            <person name="Lucas S."/>
            <person name="Huang K."/>
            <person name="Goodstein D.M."/>
            <person name="Hawkins T."/>
            <person name="Plengvidhya V."/>
            <person name="Welker D."/>
            <person name="Hughes J."/>
            <person name="Goh Y."/>
            <person name="Benson A."/>
            <person name="Baldwin K."/>
            <person name="Lee J.-H."/>
            <person name="Diaz-Muniz I."/>
            <person name="Dosti B."/>
            <person name="Smeianov V."/>
            <person name="Wechter W."/>
            <person name="Barabote R."/>
            <person name="Lorca G."/>
            <person name="Altermann E."/>
            <person name="Barrangou R."/>
            <person name="Ganesan B."/>
            <person name="Xie Y."/>
            <person name="Rawsthorne H."/>
            <person name="Tamir D."/>
            <person name="Parker C."/>
            <person name="Breidt F."/>
            <person name="Broadbent J.R."/>
            <person name="Hutkins R."/>
            <person name="O'Sullivan D."/>
            <person name="Steele J."/>
            <person name="Unlu G."/>
            <person name="Saier M.H. Jr."/>
            <person name="Klaenhammer T."/>
            <person name="Richardson P."/>
            <person name="Kozyavkin S."/>
            <person name="Weimer B.C."/>
            <person name="Mills D.A."/>
        </authorList>
    </citation>
    <scope>NUCLEOTIDE SEQUENCE [LARGE SCALE GENOMIC DNA]</scope>
    <source>
        <strain>ATCC 25745 / CCUG 21536 / LMG 10740 / 183-1w</strain>
    </source>
</reference>
<name>PTH_PEDPA</name>
<proteinExistence type="inferred from homology"/>
<gene>
    <name evidence="1" type="primary">pth</name>
    <name type="ordered locus">PEPE_1553</name>
</gene>
<protein>
    <recommendedName>
        <fullName evidence="1">Peptidyl-tRNA hydrolase</fullName>
        <shortName evidence="1">Pth</shortName>
        <ecNumber evidence="1">3.1.1.29</ecNumber>
    </recommendedName>
</protein>
<accession>Q03DZ8</accession>
<dbReference type="EC" id="3.1.1.29" evidence="1"/>
<dbReference type="EMBL" id="CP000422">
    <property type="protein sequence ID" value="ABJ68574.1"/>
    <property type="molecule type" value="Genomic_DNA"/>
</dbReference>
<dbReference type="RefSeq" id="WP_002833022.1">
    <property type="nucleotide sequence ID" value="NC_008525.1"/>
</dbReference>
<dbReference type="SMR" id="Q03DZ8"/>
<dbReference type="STRING" id="278197.PEPE_1553"/>
<dbReference type="GeneID" id="33062602"/>
<dbReference type="KEGG" id="ppe:PEPE_1553"/>
<dbReference type="eggNOG" id="COG0193">
    <property type="taxonomic scope" value="Bacteria"/>
</dbReference>
<dbReference type="HOGENOM" id="CLU_062456_4_1_9"/>
<dbReference type="OrthoDB" id="9800507at2"/>
<dbReference type="Proteomes" id="UP000000773">
    <property type="component" value="Chromosome"/>
</dbReference>
<dbReference type="GO" id="GO:0005737">
    <property type="term" value="C:cytoplasm"/>
    <property type="evidence" value="ECO:0007669"/>
    <property type="project" value="UniProtKB-SubCell"/>
</dbReference>
<dbReference type="GO" id="GO:0004045">
    <property type="term" value="F:peptidyl-tRNA hydrolase activity"/>
    <property type="evidence" value="ECO:0007669"/>
    <property type="project" value="UniProtKB-UniRule"/>
</dbReference>
<dbReference type="GO" id="GO:0000049">
    <property type="term" value="F:tRNA binding"/>
    <property type="evidence" value="ECO:0007669"/>
    <property type="project" value="UniProtKB-UniRule"/>
</dbReference>
<dbReference type="GO" id="GO:0006515">
    <property type="term" value="P:protein quality control for misfolded or incompletely synthesized proteins"/>
    <property type="evidence" value="ECO:0007669"/>
    <property type="project" value="UniProtKB-UniRule"/>
</dbReference>
<dbReference type="GO" id="GO:0072344">
    <property type="term" value="P:rescue of stalled ribosome"/>
    <property type="evidence" value="ECO:0007669"/>
    <property type="project" value="UniProtKB-UniRule"/>
</dbReference>
<dbReference type="CDD" id="cd00462">
    <property type="entry name" value="PTH"/>
    <property type="match status" value="1"/>
</dbReference>
<dbReference type="FunFam" id="3.40.50.1470:FF:000001">
    <property type="entry name" value="Peptidyl-tRNA hydrolase"/>
    <property type="match status" value="1"/>
</dbReference>
<dbReference type="Gene3D" id="3.40.50.1470">
    <property type="entry name" value="Peptidyl-tRNA hydrolase"/>
    <property type="match status" value="1"/>
</dbReference>
<dbReference type="HAMAP" id="MF_00083">
    <property type="entry name" value="Pept_tRNA_hydro_bact"/>
    <property type="match status" value="1"/>
</dbReference>
<dbReference type="InterPro" id="IPR001328">
    <property type="entry name" value="Pept_tRNA_hydro"/>
</dbReference>
<dbReference type="InterPro" id="IPR018171">
    <property type="entry name" value="Pept_tRNA_hydro_CS"/>
</dbReference>
<dbReference type="InterPro" id="IPR036416">
    <property type="entry name" value="Pept_tRNA_hydro_sf"/>
</dbReference>
<dbReference type="NCBIfam" id="TIGR00447">
    <property type="entry name" value="pth"/>
    <property type="match status" value="1"/>
</dbReference>
<dbReference type="PANTHER" id="PTHR17224">
    <property type="entry name" value="PEPTIDYL-TRNA HYDROLASE"/>
    <property type="match status" value="1"/>
</dbReference>
<dbReference type="PANTHER" id="PTHR17224:SF1">
    <property type="entry name" value="PEPTIDYL-TRNA HYDROLASE"/>
    <property type="match status" value="1"/>
</dbReference>
<dbReference type="Pfam" id="PF01195">
    <property type="entry name" value="Pept_tRNA_hydro"/>
    <property type="match status" value="1"/>
</dbReference>
<dbReference type="SUPFAM" id="SSF53178">
    <property type="entry name" value="Peptidyl-tRNA hydrolase-like"/>
    <property type="match status" value="1"/>
</dbReference>
<dbReference type="PROSITE" id="PS01195">
    <property type="entry name" value="PEPT_TRNA_HYDROL_1"/>
    <property type="match status" value="1"/>
</dbReference>
<dbReference type="PROSITE" id="PS01196">
    <property type="entry name" value="PEPT_TRNA_HYDROL_2"/>
    <property type="match status" value="1"/>
</dbReference>
<organism>
    <name type="scientific">Pediococcus pentosaceus (strain ATCC 25745 / CCUG 21536 / LMG 10740 / 183-1w)</name>
    <dbReference type="NCBI Taxonomy" id="278197"/>
    <lineage>
        <taxon>Bacteria</taxon>
        <taxon>Bacillati</taxon>
        <taxon>Bacillota</taxon>
        <taxon>Bacilli</taxon>
        <taxon>Lactobacillales</taxon>
        <taxon>Lactobacillaceae</taxon>
        <taxon>Pediococcus</taxon>
    </lineage>
</organism>
<evidence type="ECO:0000255" key="1">
    <source>
        <dbReference type="HAMAP-Rule" id="MF_00083"/>
    </source>
</evidence>